<organism>
    <name type="scientific">Streptococcus mutans serotype c (strain ATCC 700610 / UA159)</name>
    <dbReference type="NCBI Taxonomy" id="210007"/>
    <lineage>
        <taxon>Bacteria</taxon>
        <taxon>Bacillati</taxon>
        <taxon>Bacillota</taxon>
        <taxon>Bacilli</taxon>
        <taxon>Lactobacillales</taxon>
        <taxon>Streptococcaceae</taxon>
        <taxon>Streptococcus</taxon>
    </lineage>
</organism>
<gene>
    <name type="primary">ipk</name>
    <name type="ordered locus">SMU_1996</name>
</gene>
<accession>Q8DS40</accession>
<feature type="chain" id="PRO_0000189273" description="Putative 4-diphosphocytidyl-2-C-methyl-D-erythritol kinase">
    <location>
        <begin position="1"/>
        <end position="282"/>
    </location>
</feature>
<feature type="active site" evidence="1">
    <location>
        <position position="10"/>
    </location>
</feature>
<feature type="active site" evidence="1">
    <location>
        <position position="136"/>
    </location>
</feature>
<feature type="binding site" evidence="1">
    <location>
        <begin position="94"/>
        <end position="104"/>
    </location>
    <ligand>
        <name>ATP</name>
        <dbReference type="ChEBI" id="CHEBI:30616"/>
    </ligand>
</feature>
<reference key="1">
    <citation type="journal article" date="2002" name="Proc. Natl. Acad. Sci. U.S.A.">
        <title>Genome sequence of Streptococcus mutans UA159, a cariogenic dental pathogen.</title>
        <authorList>
            <person name="Ajdic D.J."/>
            <person name="McShan W.M."/>
            <person name="McLaughlin R.E."/>
            <person name="Savic G."/>
            <person name="Chang J."/>
            <person name="Carson M.B."/>
            <person name="Primeaux C."/>
            <person name="Tian R."/>
            <person name="Kenton S."/>
            <person name="Jia H.G."/>
            <person name="Lin S.P."/>
            <person name="Qian Y."/>
            <person name="Li S."/>
            <person name="Zhu H."/>
            <person name="Najar F.Z."/>
            <person name="Lai H."/>
            <person name="White J."/>
            <person name="Roe B.A."/>
            <person name="Ferretti J.J."/>
        </authorList>
    </citation>
    <scope>NUCLEOTIDE SEQUENCE [LARGE SCALE GENOMIC DNA]</scope>
    <source>
        <strain>ATCC 700610 / UA159</strain>
    </source>
</reference>
<name>ISPE_STRMU</name>
<evidence type="ECO:0000255" key="1">
    <source>
        <dbReference type="HAMAP-Rule" id="MF_00061"/>
    </source>
</evidence>
<keyword id="KW-0067">ATP-binding</keyword>
<keyword id="KW-0418">Kinase</keyword>
<keyword id="KW-0547">Nucleotide-binding</keyword>
<keyword id="KW-1185">Reference proteome</keyword>
<keyword id="KW-0808">Transferase</keyword>
<protein>
    <recommendedName>
        <fullName evidence="1">Putative 4-diphosphocytidyl-2-C-methyl-D-erythritol kinase</fullName>
        <shortName evidence="1">CMK</shortName>
        <ecNumber evidence="1">2.7.1.148</ecNumber>
    </recommendedName>
    <alternativeName>
        <fullName evidence="1">4-(cytidine-5'-diphospho)-2-C-methyl-D-erythritol kinase</fullName>
    </alternativeName>
</protein>
<proteinExistence type="inferred from homology"/>
<sequence length="282" mass="30964">MEIIEKAPAKINLGLDIAGKYQDGFHELSMIMASVDLNDYLTITEIAEDKIVVESNNCKLPLNRKNDVYKAAHLLKRRYHISTGLKISLQKKIPICAGLGGGSSDAAATLRALNCLWKLNLSPKELIDVGFEIGSDVPYCIEAGCALISGKGEIVEPLATTLSTWVVLVKPDFGISTKTIFKEIDMATISRVDIPALKEALLANYYEDALQFMGNSLEDITIAKKPFIQKIKGRMIKCGADIALMTGSGPTVFALCRTEKRADRVVNSMKGFCKEVYKVRML</sequence>
<dbReference type="EC" id="2.7.1.148" evidence="1"/>
<dbReference type="EMBL" id="AE014133">
    <property type="protein sequence ID" value="AAN59600.1"/>
    <property type="molecule type" value="Genomic_DNA"/>
</dbReference>
<dbReference type="RefSeq" id="NP_722294.1">
    <property type="nucleotide sequence ID" value="NC_004350.2"/>
</dbReference>
<dbReference type="SMR" id="Q8DS40"/>
<dbReference type="STRING" id="210007.SMU_1996"/>
<dbReference type="KEGG" id="smu:SMU_1996"/>
<dbReference type="PATRIC" id="fig|210007.7.peg.1777"/>
<dbReference type="eggNOG" id="COG1947">
    <property type="taxonomic scope" value="Bacteria"/>
</dbReference>
<dbReference type="HOGENOM" id="CLU_053057_1_1_9"/>
<dbReference type="OrthoDB" id="9809438at2"/>
<dbReference type="PhylomeDB" id="Q8DS40"/>
<dbReference type="Proteomes" id="UP000002512">
    <property type="component" value="Chromosome"/>
</dbReference>
<dbReference type="GO" id="GO:0050515">
    <property type="term" value="F:4-(cytidine 5'-diphospho)-2-C-methyl-D-erythritol kinase activity"/>
    <property type="evidence" value="ECO:0007669"/>
    <property type="project" value="UniProtKB-UniRule"/>
</dbReference>
<dbReference type="GO" id="GO:0005524">
    <property type="term" value="F:ATP binding"/>
    <property type="evidence" value="ECO:0007669"/>
    <property type="project" value="UniProtKB-UniRule"/>
</dbReference>
<dbReference type="GO" id="GO:0016114">
    <property type="term" value="P:terpenoid biosynthetic process"/>
    <property type="evidence" value="ECO:0007669"/>
    <property type="project" value="InterPro"/>
</dbReference>
<dbReference type="Gene3D" id="3.30.230.10">
    <property type="match status" value="1"/>
</dbReference>
<dbReference type="Gene3D" id="3.30.70.890">
    <property type="entry name" value="GHMP kinase, C-terminal domain"/>
    <property type="match status" value="1"/>
</dbReference>
<dbReference type="HAMAP" id="MF_00061">
    <property type="entry name" value="IspE"/>
    <property type="match status" value="1"/>
</dbReference>
<dbReference type="InterPro" id="IPR013750">
    <property type="entry name" value="GHMP_kinase_C_dom"/>
</dbReference>
<dbReference type="InterPro" id="IPR036554">
    <property type="entry name" value="GHMP_kinase_C_sf"/>
</dbReference>
<dbReference type="InterPro" id="IPR006204">
    <property type="entry name" value="GHMP_kinase_N_dom"/>
</dbReference>
<dbReference type="InterPro" id="IPR004424">
    <property type="entry name" value="IspE"/>
</dbReference>
<dbReference type="InterPro" id="IPR020568">
    <property type="entry name" value="Ribosomal_Su5_D2-typ_SF"/>
</dbReference>
<dbReference type="InterPro" id="IPR014721">
    <property type="entry name" value="Ribsml_uS5_D2-typ_fold_subgr"/>
</dbReference>
<dbReference type="NCBIfam" id="TIGR00154">
    <property type="entry name" value="ispE"/>
    <property type="match status" value="1"/>
</dbReference>
<dbReference type="PANTHER" id="PTHR43527">
    <property type="entry name" value="4-DIPHOSPHOCYTIDYL-2-C-METHYL-D-ERYTHRITOL KINASE, CHLOROPLASTIC"/>
    <property type="match status" value="1"/>
</dbReference>
<dbReference type="PANTHER" id="PTHR43527:SF2">
    <property type="entry name" value="4-DIPHOSPHOCYTIDYL-2-C-METHYL-D-ERYTHRITOL KINASE, CHLOROPLASTIC"/>
    <property type="match status" value="1"/>
</dbReference>
<dbReference type="Pfam" id="PF08544">
    <property type="entry name" value="GHMP_kinases_C"/>
    <property type="match status" value="1"/>
</dbReference>
<dbReference type="Pfam" id="PF00288">
    <property type="entry name" value="GHMP_kinases_N"/>
    <property type="match status" value="1"/>
</dbReference>
<dbReference type="PIRSF" id="PIRSF010376">
    <property type="entry name" value="IspE"/>
    <property type="match status" value="1"/>
</dbReference>
<dbReference type="SUPFAM" id="SSF55060">
    <property type="entry name" value="GHMP Kinase, C-terminal domain"/>
    <property type="match status" value="1"/>
</dbReference>
<dbReference type="SUPFAM" id="SSF54211">
    <property type="entry name" value="Ribosomal protein S5 domain 2-like"/>
    <property type="match status" value="1"/>
</dbReference>
<comment type="function">
    <text evidence="1">Catalyzes the phosphorylation of the position 2 hydroxy group of 4-diphosphocytidyl-2C-methyl-D-erythritol.</text>
</comment>
<comment type="catalytic activity">
    <reaction evidence="1">
        <text>4-CDP-2-C-methyl-D-erythritol + ATP = 4-CDP-2-C-methyl-D-erythritol 2-phosphate + ADP + H(+)</text>
        <dbReference type="Rhea" id="RHEA:18437"/>
        <dbReference type="ChEBI" id="CHEBI:15378"/>
        <dbReference type="ChEBI" id="CHEBI:30616"/>
        <dbReference type="ChEBI" id="CHEBI:57823"/>
        <dbReference type="ChEBI" id="CHEBI:57919"/>
        <dbReference type="ChEBI" id="CHEBI:456216"/>
        <dbReference type="EC" id="2.7.1.148"/>
    </reaction>
</comment>
<comment type="similarity">
    <text evidence="1">Belongs to the GHMP kinase family. IspE subfamily.</text>
</comment>